<protein>
    <recommendedName>
        <fullName evidence="1">DNA-directed RNA polymerase subunit beta'</fullName>
        <shortName evidence="1">RNAP subunit beta'</shortName>
        <ecNumber evidence="1">2.7.7.6</ecNumber>
    </recommendedName>
    <alternativeName>
        <fullName evidence="1">RNA polymerase subunit beta'</fullName>
    </alternativeName>
    <alternativeName>
        <fullName evidence="1">Transcriptase subunit beta'</fullName>
    </alternativeName>
</protein>
<gene>
    <name evidence="1" type="primary">rpoC</name>
    <name type="ordered locus">bbp_034</name>
</gene>
<accession>Q89B21</accession>
<comment type="function">
    <text evidence="1">DNA-dependent RNA polymerase catalyzes the transcription of DNA into RNA using the four ribonucleoside triphosphates as substrates.</text>
</comment>
<comment type="catalytic activity">
    <reaction evidence="1">
        <text>RNA(n) + a ribonucleoside 5'-triphosphate = RNA(n+1) + diphosphate</text>
        <dbReference type="Rhea" id="RHEA:21248"/>
        <dbReference type="Rhea" id="RHEA-COMP:14527"/>
        <dbReference type="Rhea" id="RHEA-COMP:17342"/>
        <dbReference type="ChEBI" id="CHEBI:33019"/>
        <dbReference type="ChEBI" id="CHEBI:61557"/>
        <dbReference type="ChEBI" id="CHEBI:140395"/>
        <dbReference type="EC" id="2.7.7.6"/>
    </reaction>
</comment>
<comment type="cofactor">
    <cofactor evidence="1">
        <name>Mg(2+)</name>
        <dbReference type="ChEBI" id="CHEBI:18420"/>
    </cofactor>
    <text evidence="1">Binds 1 Mg(2+) ion per subunit.</text>
</comment>
<comment type="cofactor">
    <cofactor evidence="1">
        <name>Zn(2+)</name>
        <dbReference type="ChEBI" id="CHEBI:29105"/>
    </cofactor>
    <text evidence="1">Binds 2 Zn(2+) ions per subunit.</text>
</comment>
<comment type="subunit">
    <text evidence="1">The RNAP catalytic core consists of 2 alpha, 1 beta, 1 beta' and 1 omega subunit. When a sigma factor is associated with the core the holoenzyme is formed, which can initiate transcription.</text>
</comment>
<comment type="similarity">
    <text evidence="1">Belongs to the RNA polymerase beta' chain family.</text>
</comment>
<dbReference type="EC" id="2.7.7.6" evidence="1"/>
<dbReference type="EMBL" id="AE016826">
    <property type="protein sequence ID" value="AAO26777.1"/>
    <property type="molecule type" value="Genomic_DNA"/>
</dbReference>
<dbReference type="RefSeq" id="WP_011091178.1">
    <property type="nucleotide sequence ID" value="NC_004545.1"/>
</dbReference>
<dbReference type="SMR" id="Q89B21"/>
<dbReference type="STRING" id="224915.bbp_034"/>
<dbReference type="KEGG" id="bab:bbp_034"/>
<dbReference type="eggNOG" id="COG0086">
    <property type="taxonomic scope" value="Bacteria"/>
</dbReference>
<dbReference type="HOGENOM" id="CLU_000524_3_1_6"/>
<dbReference type="OrthoDB" id="9815296at2"/>
<dbReference type="Proteomes" id="UP000000601">
    <property type="component" value="Chromosome"/>
</dbReference>
<dbReference type="GO" id="GO:0000428">
    <property type="term" value="C:DNA-directed RNA polymerase complex"/>
    <property type="evidence" value="ECO:0007669"/>
    <property type="project" value="UniProtKB-KW"/>
</dbReference>
<dbReference type="GO" id="GO:0003677">
    <property type="term" value="F:DNA binding"/>
    <property type="evidence" value="ECO:0007669"/>
    <property type="project" value="UniProtKB-UniRule"/>
</dbReference>
<dbReference type="GO" id="GO:0003899">
    <property type="term" value="F:DNA-directed RNA polymerase activity"/>
    <property type="evidence" value="ECO:0007669"/>
    <property type="project" value="UniProtKB-UniRule"/>
</dbReference>
<dbReference type="GO" id="GO:0000287">
    <property type="term" value="F:magnesium ion binding"/>
    <property type="evidence" value="ECO:0007669"/>
    <property type="project" value="UniProtKB-UniRule"/>
</dbReference>
<dbReference type="GO" id="GO:0008270">
    <property type="term" value="F:zinc ion binding"/>
    <property type="evidence" value="ECO:0007669"/>
    <property type="project" value="UniProtKB-UniRule"/>
</dbReference>
<dbReference type="GO" id="GO:0006351">
    <property type="term" value="P:DNA-templated transcription"/>
    <property type="evidence" value="ECO:0007669"/>
    <property type="project" value="UniProtKB-UniRule"/>
</dbReference>
<dbReference type="CDD" id="cd02655">
    <property type="entry name" value="RNAP_beta'_C"/>
    <property type="match status" value="1"/>
</dbReference>
<dbReference type="CDD" id="cd01609">
    <property type="entry name" value="RNAP_beta'_N"/>
    <property type="match status" value="1"/>
</dbReference>
<dbReference type="FunFam" id="1.10.132.30:FF:000003">
    <property type="entry name" value="DNA-directed RNA polymerase subunit beta"/>
    <property type="match status" value="1"/>
</dbReference>
<dbReference type="FunFam" id="1.10.150.390:FF:000002">
    <property type="entry name" value="DNA-directed RNA polymerase subunit beta"/>
    <property type="match status" value="1"/>
</dbReference>
<dbReference type="FunFam" id="1.10.40.90:FF:000001">
    <property type="entry name" value="DNA-directed RNA polymerase subunit beta"/>
    <property type="match status" value="1"/>
</dbReference>
<dbReference type="FunFam" id="4.10.860.120:FF:000001">
    <property type="entry name" value="DNA-directed RNA polymerase subunit beta"/>
    <property type="match status" value="1"/>
</dbReference>
<dbReference type="Gene3D" id="1.10.132.30">
    <property type="match status" value="1"/>
</dbReference>
<dbReference type="Gene3D" id="1.10.150.390">
    <property type="match status" value="1"/>
</dbReference>
<dbReference type="Gene3D" id="1.10.1790.20">
    <property type="match status" value="1"/>
</dbReference>
<dbReference type="Gene3D" id="1.10.40.90">
    <property type="match status" value="1"/>
</dbReference>
<dbReference type="Gene3D" id="2.40.40.20">
    <property type="match status" value="1"/>
</dbReference>
<dbReference type="Gene3D" id="2.40.50.100">
    <property type="match status" value="3"/>
</dbReference>
<dbReference type="Gene3D" id="4.10.860.120">
    <property type="entry name" value="RNA polymerase II, clamp domain"/>
    <property type="match status" value="1"/>
</dbReference>
<dbReference type="Gene3D" id="1.10.274.100">
    <property type="entry name" value="RNA polymerase Rpb1, domain 3"/>
    <property type="match status" value="1"/>
</dbReference>
<dbReference type="HAMAP" id="MF_01322">
    <property type="entry name" value="RNApol_bact_RpoC"/>
    <property type="match status" value="1"/>
</dbReference>
<dbReference type="InterPro" id="IPR045867">
    <property type="entry name" value="DNA-dir_RpoC_beta_prime"/>
</dbReference>
<dbReference type="InterPro" id="IPR012754">
    <property type="entry name" value="DNA-dir_RpoC_beta_prime_bact"/>
</dbReference>
<dbReference type="InterPro" id="IPR000722">
    <property type="entry name" value="RNA_pol_asu"/>
</dbReference>
<dbReference type="InterPro" id="IPR006592">
    <property type="entry name" value="RNA_pol_N"/>
</dbReference>
<dbReference type="InterPro" id="IPR007080">
    <property type="entry name" value="RNA_pol_Rpb1_1"/>
</dbReference>
<dbReference type="InterPro" id="IPR007066">
    <property type="entry name" value="RNA_pol_Rpb1_3"/>
</dbReference>
<dbReference type="InterPro" id="IPR042102">
    <property type="entry name" value="RNA_pol_Rpb1_3_sf"/>
</dbReference>
<dbReference type="InterPro" id="IPR007083">
    <property type="entry name" value="RNA_pol_Rpb1_4"/>
</dbReference>
<dbReference type="InterPro" id="IPR007081">
    <property type="entry name" value="RNA_pol_Rpb1_5"/>
</dbReference>
<dbReference type="InterPro" id="IPR044893">
    <property type="entry name" value="RNA_pol_Rpb1_clamp_domain"/>
</dbReference>
<dbReference type="InterPro" id="IPR038120">
    <property type="entry name" value="Rpb1_funnel_sf"/>
</dbReference>
<dbReference type="NCBIfam" id="TIGR02386">
    <property type="entry name" value="rpoC_TIGR"/>
    <property type="match status" value="1"/>
</dbReference>
<dbReference type="PANTHER" id="PTHR19376">
    <property type="entry name" value="DNA-DIRECTED RNA POLYMERASE"/>
    <property type="match status" value="1"/>
</dbReference>
<dbReference type="PANTHER" id="PTHR19376:SF54">
    <property type="entry name" value="DNA-DIRECTED RNA POLYMERASE SUBUNIT BETA"/>
    <property type="match status" value="1"/>
</dbReference>
<dbReference type="Pfam" id="PF04997">
    <property type="entry name" value="RNA_pol_Rpb1_1"/>
    <property type="match status" value="1"/>
</dbReference>
<dbReference type="Pfam" id="PF00623">
    <property type="entry name" value="RNA_pol_Rpb1_2"/>
    <property type="match status" value="2"/>
</dbReference>
<dbReference type="Pfam" id="PF04983">
    <property type="entry name" value="RNA_pol_Rpb1_3"/>
    <property type="match status" value="1"/>
</dbReference>
<dbReference type="Pfam" id="PF05000">
    <property type="entry name" value="RNA_pol_Rpb1_4"/>
    <property type="match status" value="1"/>
</dbReference>
<dbReference type="Pfam" id="PF04998">
    <property type="entry name" value="RNA_pol_Rpb1_5"/>
    <property type="match status" value="1"/>
</dbReference>
<dbReference type="SMART" id="SM00663">
    <property type="entry name" value="RPOLA_N"/>
    <property type="match status" value="1"/>
</dbReference>
<dbReference type="SUPFAM" id="SSF64484">
    <property type="entry name" value="beta and beta-prime subunits of DNA dependent RNA-polymerase"/>
    <property type="match status" value="1"/>
</dbReference>
<keyword id="KW-0240">DNA-directed RNA polymerase</keyword>
<keyword id="KW-0460">Magnesium</keyword>
<keyword id="KW-0479">Metal-binding</keyword>
<keyword id="KW-0548">Nucleotidyltransferase</keyword>
<keyword id="KW-1185">Reference proteome</keyword>
<keyword id="KW-0804">Transcription</keyword>
<keyword id="KW-0808">Transferase</keyword>
<keyword id="KW-0862">Zinc</keyword>
<proteinExistence type="inferred from homology"/>
<name>RPOC_BUCBP</name>
<reference key="1">
    <citation type="journal article" date="2003" name="Proc. Natl. Acad. Sci. U.S.A.">
        <title>Reductive genome evolution in Buchnera aphidicola.</title>
        <authorList>
            <person name="van Ham R.C.H.J."/>
            <person name="Kamerbeek J."/>
            <person name="Palacios C."/>
            <person name="Rausell C."/>
            <person name="Abascal F."/>
            <person name="Bastolla U."/>
            <person name="Fernandez J.M."/>
            <person name="Jimenez L."/>
            <person name="Postigo M."/>
            <person name="Silva F.J."/>
            <person name="Tamames J."/>
            <person name="Viguera E."/>
            <person name="Latorre A."/>
            <person name="Valencia A."/>
            <person name="Moran F."/>
            <person name="Moya A."/>
        </authorList>
    </citation>
    <scope>NUCLEOTIDE SEQUENCE [LARGE SCALE GENOMIC DNA]</scope>
    <source>
        <strain>Bp</strain>
    </source>
</reference>
<sequence>MKDLLKIFKSQIKTDEFDAIKIALASPDMIRSWSFGEVKKPETINYRTFKPERDGLFCARIFGPVKDYECLCGKYKRLKHRGVICEKCGVEVTQSKVRRERMGHIELATPIAHIWFLKSLPSRIGLLLDMPLRDIERVLYFESYVIVNEGLTNLEKNQILSEEQYLNALEKFGDEFDAKMGAEAIKLLLNSINLKQECNKLRDELNNSNSETKRKKLTKRIKLLESFIHSNNKPEWMILTVLPILPPDLRPLVPLDGGRFATSDLNDLYRRVINRNNRLKRLLELSAPDIIVRNEKRMLQEAIDALLDNGRRGRAITGSNKRPLKSLADMIKGKQGRFRQNLLGKRVDYSGRSVITVGPYLRLHQCGLPKKMALELFKPFIYGKLEKKGLATTIKAAKKMVEREESIVWDILDEVIHEHPVLLNRAPTLHRLGIQAFEPILIEGKAIQLHPLVCAAYNADFDGDQMAVHVPLTKEAQYEARSLMMSTNNILSPANGEPIIVPSQDVVLGLYYMTRKKINAKGEGMIFKNSKEAEKSYQMGFSELHAEVQVRITEYKKIDKQNFLKNTKIENTTIGRAILWMIVPKGLPFFMVNKILGKKSISKLLNTCYRILGLKSTVNFADQIMYTGFNYAARSGSSVGIDDMEIPKKKSDIISEAEIEVSEIQEQFQSGLVTAGERYNKVIDIWAAANERVSKAMMKNLSTESTTNKQGNEEKQISFNSIFMMADSGARGSAAQIRQLAGMRGLMAKPDGSIIETPITANFREGLNVLQYFISTHGARKGLADTALKTANSGYLTRRLVDVAQDLVVTEDDCNTHKGIIMTSVIEGGDVKESLREKALGRVTAENIIKPYSSDILITRNTLLNEKWCNVLEKYSIDSIKVRSVVHCDTNFGVCANCYGRDLARGNLVNKGEAIGVIAAQSIGEPGTQLTMRTFHIGGAASRAASESSIQVKNSGIIKLHNAKSVINSEGKIVITSRNVELKILDKFRRTKESYKVPYGAIIAKMDEELVNSGEIVAKWDPHTIPVISEVNGYIEFVDMIDGQSITRQTDELTGLTSIVILDTSERTSLGKDLRPALKIVDSNGENVLISGTDMPAQYFLPGKSIVQVDNSIKISSGDTLARIPQESGGTKDITGGLPRVADLFEARRPKELAILAEISGFISFGKDTKGKRRLIITPYNNNTPYEEMIPKWRQLNVFEGERVEKGDVISDGPESPHDILRLRGVQAVTKYIINEVQEVYRLQGVKINDKHIEVIIRQMLRKATIIKSEHSEFLDGEQVEYSRIKVSNRNLSKIGKKTAIFSRDLLGITKASLATESFISAASFQETTRVLTESSVAGKKDELRGLKENVIVGRLIPAGTGYAYHKKRLKNCQKDKTKEKNKPSSISVEEASANLSELLNSTL</sequence>
<evidence type="ECO:0000255" key="1">
    <source>
        <dbReference type="HAMAP-Rule" id="MF_01322"/>
    </source>
</evidence>
<organism>
    <name type="scientific">Buchnera aphidicola subsp. Baizongia pistaciae (strain Bp)</name>
    <dbReference type="NCBI Taxonomy" id="224915"/>
    <lineage>
        <taxon>Bacteria</taxon>
        <taxon>Pseudomonadati</taxon>
        <taxon>Pseudomonadota</taxon>
        <taxon>Gammaproteobacteria</taxon>
        <taxon>Enterobacterales</taxon>
        <taxon>Erwiniaceae</taxon>
        <taxon>Buchnera</taxon>
    </lineage>
</organism>
<feature type="chain" id="PRO_0000067722" description="DNA-directed RNA polymerase subunit beta'">
    <location>
        <begin position="1"/>
        <end position="1404"/>
    </location>
</feature>
<feature type="binding site" evidence="1">
    <location>
        <position position="70"/>
    </location>
    <ligand>
        <name>Zn(2+)</name>
        <dbReference type="ChEBI" id="CHEBI:29105"/>
        <label>1</label>
    </ligand>
</feature>
<feature type="binding site" evidence="1">
    <location>
        <position position="72"/>
    </location>
    <ligand>
        <name>Zn(2+)</name>
        <dbReference type="ChEBI" id="CHEBI:29105"/>
        <label>1</label>
    </ligand>
</feature>
<feature type="binding site" evidence="1">
    <location>
        <position position="85"/>
    </location>
    <ligand>
        <name>Zn(2+)</name>
        <dbReference type="ChEBI" id="CHEBI:29105"/>
        <label>1</label>
    </ligand>
</feature>
<feature type="binding site" evidence="1">
    <location>
        <position position="88"/>
    </location>
    <ligand>
        <name>Zn(2+)</name>
        <dbReference type="ChEBI" id="CHEBI:29105"/>
        <label>1</label>
    </ligand>
</feature>
<feature type="binding site" evidence="1">
    <location>
        <position position="460"/>
    </location>
    <ligand>
        <name>Mg(2+)</name>
        <dbReference type="ChEBI" id="CHEBI:18420"/>
    </ligand>
</feature>
<feature type="binding site" evidence="1">
    <location>
        <position position="462"/>
    </location>
    <ligand>
        <name>Mg(2+)</name>
        <dbReference type="ChEBI" id="CHEBI:18420"/>
    </ligand>
</feature>
<feature type="binding site" evidence="1">
    <location>
        <position position="464"/>
    </location>
    <ligand>
        <name>Mg(2+)</name>
        <dbReference type="ChEBI" id="CHEBI:18420"/>
    </ligand>
</feature>
<feature type="binding site" evidence="1">
    <location>
        <position position="814"/>
    </location>
    <ligand>
        <name>Zn(2+)</name>
        <dbReference type="ChEBI" id="CHEBI:29105"/>
        <label>2</label>
    </ligand>
</feature>
<feature type="binding site" evidence="1">
    <location>
        <position position="888"/>
    </location>
    <ligand>
        <name>Zn(2+)</name>
        <dbReference type="ChEBI" id="CHEBI:29105"/>
        <label>2</label>
    </ligand>
</feature>
<feature type="binding site" evidence="1">
    <location>
        <position position="895"/>
    </location>
    <ligand>
        <name>Zn(2+)</name>
        <dbReference type="ChEBI" id="CHEBI:29105"/>
        <label>2</label>
    </ligand>
</feature>
<feature type="binding site" evidence="1">
    <location>
        <position position="898"/>
    </location>
    <ligand>
        <name>Zn(2+)</name>
        <dbReference type="ChEBI" id="CHEBI:29105"/>
        <label>2</label>
    </ligand>
</feature>